<organism>
    <name type="scientific">Shigella dysenteriae serotype 1 (strain Sd197)</name>
    <dbReference type="NCBI Taxonomy" id="300267"/>
    <lineage>
        <taxon>Bacteria</taxon>
        <taxon>Pseudomonadati</taxon>
        <taxon>Pseudomonadota</taxon>
        <taxon>Gammaproteobacteria</taxon>
        <taxon>Enterobacterales</taxon>
        <taxon>Enterobacteriaceae</taxon>
        <taxon>Shigella</taxon>
    </lineage>
</organism>
<protein>
    <recommendedName>
        <fullName evidence="1">Threonine--tRNA ligase</fullName>
        <ecNumber evidence="1">6.1.1.3</ecNumber>
    </recommendedName>
    <alternativeName>
        <fullName evidence="1">Threonyl-tRNA synthetase</fullName>
        <shortName evidence="1">ThrRS</shortName>
    </alternativeName>
</protein>
<evidence type="ECO:0000255" key="1">
    <source>
        <dbReference type="HAMAP-Rule" id="MF_00184"/>
    </source>
</evidence>
<evidence type="ECO:0000255" key="2">
    <source>
        <dbReference type="PROSITE-ProRule" id="PRU01228"/>
    </source>
</evidence>
<name>SYT_SHIDS</name>
<keyword id="KW-0007">Acetylation</keyword>
<keyword id="KW-0030">Aminoacyl-tRNA synthetase</keyword>
<keyword id="KW-0067">ATP-binding</keyword>
<keyword id="KW-0963">Cytoplasm</keyword>
<keyword id="KW-0436">Ligase</keyword>
<keyword id="KW-0479">Metal-binding</keyword>
<keyword id="KW-0547">Nucleotide-binding</keyword>
<keyword id="KW-0648">Protein biosynthesis</keyword>
<keyword id="KW-1185">Reference proteome</keyword>
<keyword id="KW-0694">RNA-binding</keyword>
<keyword id="KW-0820">tRNA-binding</keyword>
<keyword id="KW-0862">Zinc</keyword>
<feature type="chain" id="PRO_1000020512" description="Threonine--tRNA ligase">
    <location>
        <begin position="1"/>
        <end position="642"/>
    </location>
</feature>
<feature type="domain" description="TGS" evidence="2">
    <location>
        <begin position="1"/>
        <end position="61"/>
    </location>
</feature>
<feature type="region of interest" description="Catalytic" evidence="1">
    <location>
        <begin position="243"/>
        <end position="534"/>
    </location>
</feature>
<feature type="binding site" evidence="1">
    <location>
        <position position="334"/>
    </location>
    <ligand>
        <name>Zn(2+)</name>
        <dbReference type="ChEBI" id="CHEBI:29105"/>
    </ligand>
</feature>
<feature type="binding site" evidence="1">
    <location>
        <position position="385"/>
    </location>
    <ligand>
        <name>Zn(2+)</name>
        <dbReference type="ChEBI" id="CHEBI:29105"/>
    </ligand>
</feature>
<feature type="binding site" evidence="1">
    <location>
        <position position="511"/>
    </location>
    <ligand>
        <name>Zn(2+)</name>
        <dbReference type="ChEBI" id="CHEBI:29105"/>
    </ligand>
</feature>
<feature type="modified residue" description="N6-acetyllysine" evidence="1">
    <location>
        <position position="286"/>
    </location>
</feature>
<dbReference type="EC" id="6.1.1.3" evidence="1"/>
<dbReference type="EMBL" id="CP000034">
    <property type="protein sequence ID" value="ABB61925.1"/>
    <property type="molecule type" value="Genomic_DNA"/>
</dbReference>
<dbReference type="RefSeq" id="WP_001144210.1">
    <property type="nucleotide sequence ID" value="NC_007606.1"/>
</dbReference>
<dbReference type="RefSeq" id="YP_403416.1">
    <property type="nucleotide sequence ID" value="NC_007606.1"/>
</dbReference>
<dbReference type="SMR" id="Q32FI0"/>
<dbReference type="STRING" id="300267.SDY_1814"/>
<dbReference type="EnsemblBacteria" id="ABB61925">
    <property type="protein sequence ID" value="ABB61925"/>
    <property type="gene ID" value="SDY_1814"/>
</dbReference>
<dbReference type="KEGG" id="sdy:SDY_1814"/>
<dbReference type="PATRIC" id="fig|300267.13.peg.2185"/>
<dbReference type="HOGENOM" id="CLU_008554_0_1_6"/>
<dbReference type="Proteomes" id="UP000002716">
    <property type="component" value="Chromosome"/>
</dbReference>
<dbReference type="GO" id="GO:0005829">
    <property type="term" value="C:cytosol"/>
    <property type="evidence" value="ECO:0007669"/>
    <property type="project" value="TreeGrafter"/>
</dbReference>
<dbReference type="GO" id="GO:0005524">
    <property type="term" value="F:ATP binding"/>
    <property type="evidence" value="ECO:0007669"/>
    <property type="project" value="UniProtKB-UniRule"/>
</dbReference>
<dbReference type="GO" id="GO:0046872">
    <property type="term" value="F:metal ion binding"/>
    <property type="evidence" value="ECO:0007669"/>
    <property type="project" value="UniProtKB-KW"/>
</dbReference>
<dbReference type="GO" id="GO:0004829">
    <property type="term" value="F:threonine-tRNA ligase activity"/>
    <property type="evidence" value="ECO:0007669"/>
    <property type="project" value="UniProtKB-UniRule"/>
</dbReference>
<dbReference type="GO" id="GO:0000049">
    <property type="term" value="F:tRNA binding"/>
    <property type="evidence" value="ECO:0007669"/>
    <property type="project" value="UniProtKB-KW"/>
</dbReference>
<dbReference type="GO" id="GO:0006435">
    <property type="term" value="P:threonyl-tRNA aminoacylation"/>
    <property type="evidence" value="ECO:0007669"/>
    <property type="project" value="UniProtKB-UniRule"/>
</dbReference>
<dbReference type="CDD" id="cd01667">
    <property type="entry name" value="TGS_ThrRS"/>
    <property type="match status" value="1"/>
</dbReference>
<dbReference type="CDD" id="cd00860">
    <property type="entry name" value="ThrRS_anticodon"/>
    <property type="match status" value="1"/>
</dbReference>
<dbReference type="CDD" id="cd00771">
    <property type="entry name" value="ThrRS_core"/>
    <property type="match status" value="1"/>
</dbReference>
<dbReference type="FunFam" id="3.10.20.30:FF:000005">
    <property type="entry name" value="Threonine--tRNA ligase"/>
    <property type="match status" value="1"/>
</dbReference>
<dbReference type="FunFam" id="3.30.54.20:FF:000002">
    <property type="entry name" value="Threonine--tRNA ligase"/>
    <property type="match status" value="1"/>
</dbReference>
<dbReference type="FunFam" id="3.30.930.10:FF:000002">
    <property type="entry name" value="Threonine--tRNA ligase"/>
    <property type="match status" value="1"/>
</dbReference>
<dbReference type="FunFam" id="3.40.50.800:FF:000001">
    <property type="entry name" value="Threonine--tRNA ligase"/>
    <property type="match status" value="1"/>
</dbReference>
<dbReference type="FunFam" id="3.30.980.10:FF:000005">
    <property type="entry name" value="Threonyl-tRNA synthetase, mitochondrial"/>
    <property type="match status" value="1"/>
</dbReference>
<dbReference type="Gene3D" id="3.10.20.30">
    <property type="match status" value="1"/>
</dbReference>
<dbReference type="Gene3D" id="3.30.54.20">
    <property type="match status" value="1"/>
</dbReference>
<dbReference type="Gene3D" id="3.40.50.800">
    <property type="entry name" value="Anticodon-binding domain"/>
    <property type="match status" value="1"/>
</dbReference>
<dbReference type="Gene3D" id="3.30.930.10">
    <property type="entry name" value="Bira Bifunctional Protein, Domain 2"/>
    <property type="match status" value="1"/>
</dbReference>
<dbReference type="Gene3D" id="3.30.980.10">
    <property type="entry name" value="Threonyl-trna Synthetase, Chain A, domain 2"/>
    <property type="match status" value="1"/>
</dbReference>
<dbReference type="HAMAP" id="MF_00184">
    <property type="entry name" value="Thr_tRNA_synth"/>
    <property type="match status" value="1"/>
</dbReference>
<dbReference type="InterPro" id="IPR002314">
    <property type="entry name" value="aa-tRNA-synt_IIb"/>
</dbReference>
<dbReference type="InterPro" id="IPR006195">
    <property type="entry name" value="aa-tRNA-synth_II"/>
</dbReference>
<dbReference type="InterPro" id="IPR045864">
    <property type="entry name" value="aa-tRNA-synth_II/BPL/LPL"/>
</dbReference>
<dbReference type="InterPro" id="IPR004154">
    <property type="entry name" value="Anticodon-bd"/>
</dbReference>
<dbReference type="InterPro" id="IPR036621">
    <property type="entry name" value="Anticodon-bd_dom_sf"/>
</dbReference>
<dbReference type="InterPro" id="IPR012675">
    <property type="entry name" value="Beta-grasp_dom_sf"/>
</dbReference>
<dbReference type="InterPro" id="IPR004095">
    <property type="entry name" value="TGS"/>
</dbReference>
<dbReference type="InterPro" id="IPR012676">
    <property type="entry name" value="TGS-like"/>
</dbReference>
<dbReference type="InterPro" id="IPR002320">
    <property type="entry name" value="Thr-tRNA-ligase_IIa"/>
</dbReference>
<dbReference type="InterPro" id="IPR018163">
    <property type="entry name" value="Thr/Ala-tRNA-synth_IIc_edit"/>
</dbReference>
<dbReference type="InterPro" id="IPR047246">
    <property type="entry name" value="ThrRS_anticodon"/>
</dbReference>
<dbReference type="InterPro" id="IPR033728">
    <property type="entry name" value="ThrRS_core"/>
</dbReference>
<dbReference type="InterPro" id="IPR012947">
    <property type="entry name" value="tRNA_SAD"/>
</dbReference>
<dbReference type="NCBIfam" id="TIGR00418">
    <property type="entry name" value="thrS"/>
    <property type="match status" value="1"/>
</dbReference>
<dbReference type="PANTHER" id="PTHR11451:SF44">
    <property type="entry name" value="THREONINE--TRNA LIGASE, CHLOROPLASTIC_MITOCHONDRIAL 2"/>
    <property type="match status" value="1"/>
</dbReference>
<dbReference type="PANTHER" id="PTHR11451">
    <property type="entry name" value="THREONINE-TRNA LIGASE"/>
    <property type="match status" value="1"/>
</dbReference>
<dbReference type="Pfam" id="PF03129">
    <property type="entry name" value="HGTP_anticodon"/>
    <property type="match status" value="1"/>
</dbReference>
<dbReference type="Pfam" id="PF02824">
    <property type="entry name" value="TGS"/>
    <property type="match status" value="1"/>
</dbReference>
<dbReference type="Pfam" id="PF00587">
    <property type="entry name" value="tRNA-synt_2b"/>
    <property type="match status" value="1"/>
</dbReference>
<dbReference type="Pfam" id="PF07973">
    <property type="entry name" value="tRNA_SAD"/>
    <property type="match status" value="1"/>
</dbReference>
<dbReference type="PRINTS" id="PR01047">
    <property type="entry name" value="TRNASYNTHTHR"/>
</dbReference>
<dbReference type="SMART" id="SM00863">
    <property type="entry name" value="tRNA_SAD"/>
    <property type="match status" value="1"/>
</dbReference>
<dbReference type="SUPFAM" id="SSF52954">
    <property type="entry name" value="Class II aaRS ABD-related"/>
    <property type="match status" value="1"/>
</dbReference>
<dbReference type="SUPFAM" id="SSF55681">
    <property type="entry name" value="Class II aaRS and biotin synthetases"/>
    <property type="match status" value="1"/>
</dbReference>
<dbReference type="SUPFAM" id="SSF81271">
    <property type="entry name" value="TGS-like"/>
    <property type="match status" value="1"/>
</dbReference>
<dbReference type="SUPFAM" id="SSF55186">
    <property type="entry name" value="ThrRS/AlaRS common domain"/>
    <property type="match status" value="1"/>
</dbReference>
<dbReference type="PROSITE" id="PS50862">
    <property type="entry name" value="AA_TRNA_LIGASE_II"/>
    <property type="match status" value="1"/>
</dbReference>
<dbReference type="PROSITE" id="PS51880">
    <property type="entry name" value="TGS"/>
    <property type="match status" value="1"/>
</dbReference>
<proteinExistence type="inferred from homology"/>
<comment type="function">
    <text evidence="1">Catalyzes the attachment of threonine to tRNA(Thr) in a two-step reaction: L-threonine is first activated by ATP to form Thr-AMP and then transferred to the acceptor end of tRNA(Thr). Also edits incorrectly charged L-seryl-tRNA(Thr).</text>
</comment>
<comment type="catalytic activity">
    <reaction evidence="1">
        <text>tRNA(Thr) + L-threonine + ATP = L-threonyl-tRNA(Thr) + AMP + diphosphate + H(+)</text>
        <dbReference type="Rhea" id="RHEA:24624"/>
        <dbReference type="Rhea" id="RHEA-COMP:9670"/>
        <dbReference type="Rhea" id="RHEA-COMP:9704"/>
        <dbReference type="ChEBI" id="CHEBI:15378"/>
        <dbReference type="ChEBI" id="CHEBI:30616"/>
        <dbReference type="ChEBI" id="CHEBI:33019"/>
        <dbReference type="ChEBI" id="CHEBI:57926"/>
        <dbReference type="ChEBI" id="CHEBI:78442"/>
        <dbReference type="ChEBI" id="CHEBI:78534"/>
        <dbReference type="ChEBI" id="CHEBI:456215"/>
        <dbReference type="EC" id="6.1.1.3"/>
    </reaction>
</comment>
<comment type="cofactor">
    <cofactor evidence="1">
        <name>Zn(2+)</name>
        <dbReference type="ChEBI" id="CHEBI:29105"/>
    </cofactor>
    <text evidence="1">Binds 1 zinc ion per subunit.</text>
</comment>
<comment type="subunit">
    <text evidence="1">Homodimer.</text>
</comment>
<comment type="subcellular location">
    <subcellularLocation>
        <location evidence="1">Cytoplasm</location>
    </subcellularLocation>
</comment>
<comment type="similarity">
    <text evidence="1">Belongs to the class-II aminoacyl-tRNA synthetase family.</text>
</comment>
<sequence length="642" mass="74044">MPVITLPDGSQRHYDHAVSPMDVALDIGPGLAKACIAGRVNGELVDACDLIENDTQLSIITAKDEEGLEIIRHSCAHLLGHAIKQLWPHTKMAIGPVIDNGFYYDVDLDRTLTQEDVEALEKRMHELAEKNYDVIKKKVSWHEARETFANRGESYKVSILDENIAHDDKPGLYFHEEYVDMCRGPHVPNMRFCHHFKLMKTAGAYWRGDSNNKMLQRIYGTAWADKKALNAYLQRLEEAAKRDHRKIGKQLDLYHMQEEAPGMVFWHNDGWTIFRELEVFVRSKLKEYQYQEVKGPFMMDRVLWEKTGHWDNYKDAMFTTSSENREYCIKPMNCPGHVQIFNQGLKSYRDLPLRMAEFGSCHRNEPSGSLHGLMRVRGFTQDDAHIFCTEEQIRDEVNGCIRLVYDMYSTFGFEKIVVKLSTRPEKRIGSDEMWDRAEADLAVALEENNIPFEYQLGEGAFYGPKIEFTLYDCLDRAWQCGTVQLDFSLPSRLSASYVGEDNERKVPVMIHRAILGSMERFIGILTEEFAGFFPTWLAPVQVVIMNITDSQSDYVNELTQKLSNAGIRVKADLRNEKIGFKIREHTLRRVPYMLVCGDKEVESGKVAVRTRRGKELGSMDVNEVIEKLQQEIRSRSLKQLEE</sequence>
<reference key="1">
    <citation type="journal article" date="2005" name="Nucleic Acids Res.">
        <title>Genome dynamics and diversity of Shigella species, the etiologic agents of bacillary dysentery.</title>
        <authorList>
            <person name="Yang F."/>
            <person name="Yang J."/>
            <person name="Zhang X."/>
            <person name="Chen L."/>
            <person name="Jiang Y."/>
            <person name="Yan Y."/>
            <person name="Tang X."/>
            <person name="Wang J."/>
            <person name="Xiong Z."/>
            <person name="Dong J."/>
            <person name="Xue Y."/>
            <person name="Zhu Y."/>
            <person name="Xu X."/>
            <person name="Sun L."/>
            <person name="Chen S."/>
            <person name="Nie H."/>
            <person name="Peng J."/>
            <person name="Xu J."/>
            <person name="Wang Y."/>
            <person name="Yuan Z."/>
            <person name="Wen Y."/>
            <person name="Yao Z."/>
            <person name="Shen Y."/>
            <person name="Qiang B."/>
            <person name="Hou Y."/>
            <person name="Yu J."/>
            <person name="Jin Q."/>
        </authorList>
    </citation>
    <scope>NUCLEOTIDE SEQUENCE [LARGE SCALE GENOMIC DNA]</scope>
    <source>
        <strain>Sd197</strain>
    </source>
</reference>
<accession>Q32FI0</accession>
<gene>
    <name evidence="1" type="primary">thrS</name>
    <name type="ordered locus">SDY_1814</name>
</gene>